<accession>A8ZTU7</accession>
<protein>
    <recommendedName>
        <fullName evidence="1">6,7-dimethyl-8-ribityllumazine synthase</fullName>
        <shortName evidence="1">DMRL synthase</shortName>
        <shortName evidence="1">LS</shortName>
        <shortName evidence="1">Lumazine synthase</shortName>
        <ecNumber evidence="1">2.5.1.78</ecNumber>
    </recommendedName>
</protein>
<reference key="1">
    <citation type="submission" date="2007-10" db="EMBL/GenBank/DDBJ databases">
        <title>Complete sequence of Desulfococcus oleovorans Hxd3.</title>
        <authorList>
            <consortium name="US DOE Joint Genome Institute"/>
            <person name="Copeland A."/>
            <person name="Lucas S."/>
            <person name="Lapidus A."/>
            <person name="Barry K."/>
            <person name="Glavina del Rio T."/>
            <person name="Dalin E."/>
            <person name="Tice H."/>
            <person name="Pitluck S."/>
            <person name="Kiss H."/>
            <person name="Brettin T."/>
            <person name="Bruce D."/>
            <person name="Detter J.C."/>
            <person name="Han C."/>
            <person name="Schmutz J."/>
            <person name="Larimer F."/>
            <person name="Land M."/>
            <person name="Hauser L."/>
            <person name="Kyrpides N."/>
            <person name="Kim E."/>
            <person name="Wawrik B."/>
            <person name="Richardson P."/>
        </authorList>
    </citation>
    <scope>NUCLEOTIDE SEQUENCE [LARGE SCALE GENOMIC DNA]</scope>
    <source>
        <strain>DSM 6200 / JCM 39069 / Hxd3</strain>
    </source>
</reference>
<keyword id="KW-1185">Reference proteome</keyword>
<keyword id="KW-0686">Riboflavin biosynthesis</keyword>
<keyword id="KW-0808">Transferase</keyword>
<dbReference type="EC" id="2.5.1.78" evidence="1"/>
<dbReference type="EMBL" id="CP000859">
    <property type="protein sequence ID" value="ABW67880.1"/>
    <property type="molecule type" value="Genomic_DNA"/>
</dbReference>
<dbReference type="RefSeq" id="WP_012175492.1">
    <property type="nucleotide sequence ID" value="NC_009943.1"/>
</dbReference>
<dbReference type="SMR" id="A8ZTU7"/>
<dbReference type="STRING" id="96561.Dole_2076"/>
<dbReference type="KEGG" id="dol:Dole_2076"/>
<dbReference type="eggNOG" id="COG0054">
    <property type="taxonomic scope" value="Bacteria"/>
</dbReference>
<dbReference type="HOGENOM" id="CLU_089358_1_1_7"/>
<dbReference type="OrthoDB" id="9809709at2"/>
<dbReference type="UniPathway" id="UPA00275">
    <property type="reaction ID" value="UER00404"/>
</dbReference>
<dbReference type="Proteomes" id="UP000008561">
    <property type="component" value="Chromosome"/>
</dbReference>
<dbReference type="GO" id="GO:0005829">
    <property type="term" value="C:cytosol"/>
    <property type="evidence" value="ECO:0007669"/>
    <property type="project" value="TreeGrafter"/>
</dbReference>
<dbReference type="GO" id="GO:0009349">
    <property type="term" value="C:riboflavin synthase complex"/>
    <property type="evidence" value="ECO:0007669"/>
    <property type="project" value="InterPro"/>
</dbReference>
<dbReference type="GO" id="GO:0000906">
    <property type="term" value="F:6,7-dimethyl-8-ribityllumazine synthase activity"/>
    <property type="evidence" value="ECO:0007669"/>
    <property type="project" value="UniProtKB-UniRule"/>
</dbReference>
<dbReference type="GO" id="GO:0009231">
    <property type="term" value="P:riboflavin biosynthetic process"/>
    <property type="evidence" value="ECO:0007669"/>
    <property type="project" value="UniProtKB-UniRule"/>
</dbReference>
<dbReference type="CDD" id="cd09209">
    <property type="entry name" value="Lumazine_synthase-I"/>
    <property type="match status" value="1"/>
</dbReference>
<dbReference type="FunFam" id="3.40.50.960:FF:000001">
    <property type="entry name" value="6,7-dimethyl-8-ribityllumazine synthase"/>
    <property type="match status" value="1"/>
</dbReference>
<dbReference type="Gene3D" id="3.40.50.960">
    <property type="entry name" value="Lumazine/riboflavin synthase"/>
    <property type="match status" value="1"/>
</dbReference>
<dbReference type="HAMAP" id="MF_00178">
    <property type="entry name" value="Lumazine_synth"/>
    <property type="match status" value="1"/>
</dbReference>
<dbReference type="InterPro" id="IPR034964">
    <property type="entry name" value="LS"/>
</dbReference>
<dbReference type="InterPro" id="IPR002180">
    <property type="entry name" value="LS/RS"/>
</dbReference>
<dbReference type="InterPro" id="IPR036467">
    <property type="entry name" value="LS/RS_sf"/>
</dbReference>
<dbReference type="NCBIfam" id="TIGR00114">
    <property type="entry name" value="lumazine-synth"/>
    <property type="match status" value="1"/>
</dbReference>
<dbReference type="NCBIfam" id="NF000812">
    <property type="entry name" value="PRK00061.1-4"/>
    <property type="match status" value="1"/>
</dbReference>
<dbReference type="PANTHER" id="PTHR21058:SF0">
    <property type="entry name" value="6,7-DIMETHYL-8-RIBITYLLUMAZINE SYNTHASE"/>
    <property type="match status" value="1"/>
</dbReference>
<dbReference type="PANTHER" id="PTHR21058">
    <property type="entry name" value="6,7-DIMETHYL-8-RIBITYLLUMAZINE SYNTHASE DMRL SYNTHASE LUMAZINE SYNTHASE"/>
    <property type="match status" value="1"/>
</dbReference>
<dbReference type="Pfam" id="PF00885">
    <property type="entry name" value="DMRL_synthase"/>
    <property type="match status" value="1"/>
</dbReference>
<dbReference type="SUPFAM" id="SSF52121">
    <property type="entry name" value="Lumazine synthase"/>
    <property type="match status" value="1"/>
</dbReference>
<sequence>MPKLMEAGLSAKGKTFALIASRFNDFITDRLVSGAVDALVRNGAADKDIHLVKVPGAFEIPLLAKKMAEKGEYDAIVCLGAVIRGSTPHFDYVCAEVSKGIAQVSLEFSVPVIFGIVTTDTIEQAIERAGTKAGNKGWNAAVSAVEMANLMEVVTRA</sequence>
<proteinExistence type="inferred from homology"/>
<gene>
    <name evidence="1" type="primary">ribH</name>
    <name type="ordered locus">Dole_2076</name>
</gene>
<comment type="function">
    <text evidence="1">Catalyzes the formation of 6,7-dimethyl-8-ribityllumazine by condensation of 5-amino-6-(D-ribitylamino)uracil with 3,4-dihydroxy-2-butanone 4-phosphate. This is the penultimate step in the biosynthesis of riboflavin.</text>
</comment>
<comment type="catalytic activity">
    <reaction evidence="1">
        <text>(2S)-2-hydroxy-3-oxobutyl phosphate + 5-amino-6-(D-ribitylamino)uracil = 6,7-dimethyl-8-(1-D-ribityl)lumazine + phosphate + 2 H2O + H(+)</text>
        <dbReference type="Rhea" id="RHEA:26152"/>
        <dbReference type="ChEBI" id="CHEBI:15377"/>
        <dbReference type="ChEBI" id="CHEBI:15378"/>
        <dbReference type="ChEBI" id="CHEBI:15934"/>
        <dbReference type="ChEBI" id="CHEBI:43474"/>
        <dbReference type="ChEBI" id="CHEBI:58201"/>
        <dbReference type="ChEBI" id="CHEBI:58830"/>
        <dbReference type="EC" id="2.5.1.78"/>
    </reaction>
</comment>
<comment type="pathway">
    <text evidence="1">Cofactor biosynthesis; riboflavin biosynthesis; riboflavin from 2-hydroxy-3-oxobutyl phosphate and 5-amino-6-(D-ribitylamino)uracil: step 1/2.</text>
</comment>
<comment type="similarity">
    <text evidence="1">Belongs to the DMRL synthase family.</text>
</comment>
<name>RISB_DESOH</name>
<evidence type="ECO:0000255" key="1">
    <source>
        <dbReference type="HAMAP-Rule" id="MF_00178"/>
    </source>
</evidence>
<organism>
    <name type="scientific">Desulfosudis oleivorans (strain DSM 6200 / JCM 39069 / Hxd3)</name>
    <name type="common">Desulfococcus oleovorans</name>
    <dbReference type="NCBI Taxonomy" id="96561"/>
    <lineage>
        <taxon>Bacteria</taxon>
        <taxon>Pseudomonadati</taxon>
        <taxon>Thermodesulfobacteriota</taxon>
        <taxon>Desulfobacteria</taxon>
        <taxon>Desulfobacterales</taxon>
        <taxon>Desulfosudaceae</taxon>
        <taxon>Desulfosudis</taxon>
    </lineage>
</organism>
<feature type="chain" id="PRO_1000098185" description="6,7-dimethyl-8-ribityllumazine synthase">
    <location>
        <begin position="1"/>
        <end position="157"/>
    </location>
</feature>
<feature type="active site" description="Proton donor" evidence="1">
    <location>
        <position position="89"/>
    </location>
</feature>
<feature type="binding site" evidence="1">
    <location>
        <position position="23"/>
    </location>
    <ligand>
        <name>5-amino-6-(D-ribitylamino)uracil</name>
        <dbReference type="ChEBI" id="CHEBI:15934"/>
    </ligand>
</feature>
<feature type="binding site" evidence="1">
    <location>
        <begin position="57"/>
        <end position="59"/>
    </location>
    <ligand>
        <name>5-amino-6-(D-ribitylamino)uracil</name>
        <dbReference type="ChEBI" id="CHEBI:15934"/>
    </ligand>
</feature>
<feature type="binding site" evidence="1">
    <location>
        <begin position="81"/>
        <end position="83"/>
    </location>
    <ligand>
        <name>5-amino-6-(D-ribitylamino)uracil</name>
        <dbReference type="ChEBI" id="CHEBI:15934"/>
    </ligand>
</feature>
<feature type="binding site" evidence="1">
    <location>
        <begin position="86"/>
        <end position="87"/>
    </location>
    <ligand>
        <name>(2S)-2-hydroxy-3-oxobutyl phosphate</name>
        <dbReference type="ChEBI" id="CHEBI:58830"/>
    </ligand>
</feature>
<feature type="binding site" evidence="1">
    <location>
        <position position="114"/>
    </location>
    <ligand>
        <name>5-amino-6-(D-ribitylamino)uracil</name>
        <dbReference type="ChEBI" id="CHEBI:15934"/>
    </ligand>
</feature>
<feature type="binding site" evidence="1">
    <location>
        <position position="128"/>
    </location>
    <ligand>
        <name>(2S)-2-hydroxy-3-oxobutyl phosphate</name>
        <dbReference type="ChEBI" id="CHEBI:58830"/>
    </ligand>
</feature>